<accession>B1Y785</accession>
<reference key="1">
    <citation type="submission" date="2008-03" db="EMBL/GenBank/DDBJ databases">
        <title>Complete sequence of Leptothrix cholodnii SP-6.</title>
        <authorList>
            <consortium name="US DOE Joint Genome Institute"/>
            <person name="Copeland A."/>
            <person name="Lucas S."/>
            <person name="Lapidus A."/>
            <person name="Glavina del Rio T."/>
            <person name="Dalin E."/>
            <person name="Tice H."/>
            <person name="Bruce D."/>
            <person name="Goodwin L."/>
            <person name="Pitluck S."/>
            <person name="Chertkov O."/>
            <person name="Brettin T."/>
            <person name="Detter J.C."/>
            <person name="Han C."/>
            <person name="Kuske C.R."/>
            <person name="Schmutz J."/>
            <person name="Larimer F."/>
            <person name="Land M."/>
            <person name="Hauser L."/>
            <person name="Kyrpides N."/>
            <person name="Lykidis A."/>
            <person name="Emerson D."/>
            <person name="Richardson P."/>
        </authorList>
    </citation>
    <scope>NUCLEOTIDE SEQUENCE [LARGE SCALE GENOMIC DNA]</scope>
    <source>
        <strain>ATCC 51168 / LMG 8142 / SP-6</strain>
    </source>
</reference>
<evidence type="ECO:0000255" key="1">
    <source>
        <dbReference type="HAMAP-Rule" id="MF_01151"/>
    </source>
</evidence>
<gene>
    <name evidence="1" type="primary">grpE</name>
    <name type="ordered locus">Lcho_2575</name>
</gene>
<protein>
    <recommendedName>
        <fullName evidence="1">Protein GrpE</fullName>
    </recommendedName>
    <alternativeName>
        <fullName evidence="1">HSP-70 cofactor</fullName>
    </alternativeName>
</protein>
<feature type="chain" id="PRO_1000213668" description="Protein GrpE">
    <location>
        <begin position="1"/>
        <end position="181"/>
    </location>
</feature>
<keyword id="KW-0143">Chaperone</keyword>
<keyword id="KW-0963">Cytoplasm</keyword>
<keyword id="KW-1185">Reference proteome</keyword>
<keyword id="KW-0346">Stress response</keyword>
<sequence length="181" mass="19230">MPDTPKADIPSDNAALEAQGIASELIDDSAARIAELEAKNADLADAYLRAKAEADNIRRRADDDIAKSRKFAVESFAESLLPVKDSLEAAIVSHAAGKGSPEQVIEGVHATLRQLGQALERNKVLEVNPPAGTKFDPHQHQAISVVPAEQEANTVVAVLQKGYLIADRVLRPALVTVAAAK</sequence>
<proteinExistence type="inferred from homology"/>
<name>GRPE_LEPCP</name>
<comment type="function">
    <text evidence="1">Participates actively in the response to hyperosmotic and heat shock by preventing the aggregation of stress-denatured proteins, in association with DnaK and GrpE. It is the nucleotide exchange factor for DnaK and may function as a thermosensor. Unfolded proteins bind initially to DnaJ; upon interaction with the DnaJ-bound protein, DnaK hydrolyzes its bound ATP, resulting in the formation of a stable complex. GrpE releases ADP from DnaK; ATP binding to DnaK triggers the release of the substrate protein, thus completing the reaction cycle. Several rounds of ATP-dependent interactions between DnaJ, DnaK and GrpE are required for fully efficient folding.</text>
</comment>
<comment type="subunit">
    <text evidence="1">Homodimer.</text>
</comment>
<comment type="subcellular location">
    <subcellularLocation>
        <location evidence="1">Cytoplasm</location>
    </subcellularLocation>
</comment>
<comment type="similarity">
    <text evidence="1">Belongs to the GrpE family.</text>
</comment>
<organism>
    <name type="scientific">Leptothrix cholodnii (strain ATCC 51168 / LMG 8142 / SP-6)</name>
    <name type="common">Leptothrix discophora (strain SP-6)</name>
    <dbReference type="NCBI Taxonomy" id="395495"/>
    <lineage>
        <taxon>Bacteria</taxon>
        <taxon>Pseudomonadati</taxon>
        <taxon>Pseudomonadota</taxon>
        <taxon>Betaproteobacteria</taxon>
        <taxon>Burkholderiales</taxon>
        <taxon>Sphaerotilaceae</taxon>
        <taxon>Leptothrix</taxon>
    </lineage>
</organism>
<dbReference type="EMBL" id="CP001013">
    <property type="protein sequence ID" value="ACB34840.1"/>
    <property type="molecule type" value="Genomic_DNA"/>
</dbReference>
<dbReference type="RefSeq" id="WP_012347596.1">
    <property type="nucleotide sequence ID" value="NC_010524.1"/>
</dbReference>
<dbReference type="SMR" id="B1Y785"/>
<dbReference type="STRING" id="395495.Lcho_2575"/>
<dbReference type="KEGG" id="lch:Lcho_2575"/>
<dbReference type="eggNOG" id="COG0576">
    <property type="taxonomic scope" value="Bacteria"/>
</dbReference>
<dbReference type="HOGENOM" id="CLU_057217_6_1_4"/>
<dbReference type="OrthoDB" id="9789811at2"/>
<dbReference type="Proteomes" id="UP000001693">
    <property type="component" value="Chromosome"/>
</dbReference>
<dbReference type="GO" id="GO:0005829">
    <property type="term" value="C:cytosol"/>
    <property type="evidence" value="ECO:0007669"/>
    <property type="project" value="TreeGrafter"/>
</dbReference>
<dbReference type="GO" id="GO:0000774">
    <property type="term" value="F:adenyl-nucleotide exchange factor activity"/>
    <property type="evidence" value="ECO:0007669"/>
    <property type="project" value="InterPro"/>
</dbReference>
<dbReference type="GO" id="GO:0042803">
    <property type="term" value="F:protein homodimerization activity"/>
    <property type="evidence" value="ECO:0007669"/>
    <property type="project" value="InterPro"/>
</dbReference>
<dbReference type="GO" id="GO:0051087">
    <property type="term" value="F:protein-folding chaperone binding"/>
    <property type="evidence" value="ECO:0007669"/>
    <property type="project" value="InterPro"/>
</dbReference>
<dbReference type="GO" id="GO:0051082">
    <property type="term" value="F:unfolded protein binding"/>
    <property type="evidence" value="ECO:0007669"/>
    <property type="project" value="TreeGrafter"/>
</dbReference>
<dbReference type="GO" id="GO:0006457">
    <property type="term" value="P:protein folding"/>
    <property type="evidence" value="ECO:0007669"/>
    <property type="project" value="InterPro"/>
</dbReference>
<dbReference type="CDD" id="cd00446">
    <property type="entry name" value="GrpE"/>
    <property type="match status" value="1"/>
</dbReference>
<dbReference type="FunFam" id="2.30.22.10:FF:000001">
    <property type="entry name" value="Protein GrpE"/>
    <property type="match status" value="1"/>
</dbReference>
<dbReference type="Gene3D" id="3.90.20.20">
    <property type="match status" value="1"/>
</dbReference>
<dbReference type="Gene3D" id="2.30.22.10">
    <property type="entry name" value="Head domain of nucleotide exchange factor GrpE"/>
    <property type="match status" value="1"/>
</dbReference>
<dbReference type="HAMAP" id="MF_01151">
    <property type="entry name" value="GrpE"/>
    <property type="match status" value="1"/>
</dbReference>
<dbReference type="InterPro" id="IPR000740">
    <property type="entry name" value="GrpE"/>
</dbReference>
<dbReference type="InterPro" id="IPR013805">
    <property type="entry name" value="GrpE_coiled_coil"/>
</dbReference>
<dbReference type="InterPro" id="IPR009012">
    <property type="entry name" value="GrpE_head"/>
</dbReference>
<dbReference type="NCBIfam" id="NF010737">
    <property type="entry name" value="PRK14139.1"/>
    <property type="match status" value="1"/>
</dbReference>
<dbReference type="NCBIfam" id="NF010738">
    <property type="entry name" value="PRK14140.1"/>
    <property type="match status" value="1"/>
</dbReference>
<dbReference type="PANTHER" id="PTHR21237">
    <property type="entry name" value="GRPE PROTEIN"/>
    <property type="match status" value="1"/>
</dbReference>
<dbReference type="PANTHER" id="PTHR21237:SF23">
    <property type="entry name" value="GRPE PROTEIN HOMOLOG, MITOCHONDRIAL"/>
    <property type="match status" value="1"/>
</dbReference>
<dbReference type="Pfam" id="PF01025">
    <property type="entry name" value="GrpE"/>
    <property type="match status" value="1"/>
</dbReference>
<dbReference type="PRINTS" id="PR00773">
    <property type="entry name" value="GRPEPROTEIN"/>
</dbReference>
<dbReference type="SUPFAM" id="SSF58014">
    <property type="entry name" value="Coiled-coil domain of nucleotide exchange factor GrpE"/>
    <property type="match status" value="1"/>
</dbReference>
<dbReference type="SUPFAM" id="SSF51064">
    <property type="entry name" value="Head domain of nucleotide exchange factor GrpE"/>
    <property type="match status" value="1"/>
</dbReference>
<dbReference type="PROSITE" id="PS01071">
    <property type="entry name" value="GRPE"/>
    <property type="match status" value="1"/>
</dbReference>